<keyword id="KW-0687">Ribonucleoprotein</keyword>
<keyword id="KW-0689">Ribosomal protein</keyword>
<dbReference type="EMBL" id="BX897700">
    <property type="protein sequence ID" value="CAF26203.1"/>
    <property type="molecule type" value="Genomic_DNA"/>
</dbReference>
<dbReference type="RefSeq" id="WP_011179457.1">
    <property type="nucleotide sequence ID" value="NC_005955.1"/>
</dbReference>
<dbReference type="SMR" id="Q6FZL8"/>
<dbReference type="GeneID" id="56532930"/>
<dbReference type="KEGG" id="bqu:BQ07140"/>
<dbReference type="eggNOG" id="COG0222">
    <property type="taxonomic scope" value="Bacteria"/>
</dbReference>
<dbReference type="HOGENOM" id="CLU_086499_3_0_5"/>
<dbReference type="OrthoDB" id="9811748at2"/>
<dbReference type="Proteomes" id="UP000000597">
    <property type="component" value="Chromosome"/>
</dbReference>
<dbReference type="GO" id="GO:0022625">
    <property type="term" value="C:cytosolic large ribosomal subunit"/>
    <property type="evidence" value="ECO:0007669"/>
    <property type="project" value="TreeGrafter"/>
</dbReference>
<dbReference type="GO" id="GO:0003729">
    <property type="term" value="F:mRNA binding"/>
    <property type="evidence" value="ECO:0007669"/>
    <property type="project" value="TreeGrafter"/>
</dbReference>
<dbReference type="GO" id="GO:0003735">
    <property type="term" value="F:structural constituent of ribosome"/>
    <property type="evidence" value="ECO:0007669"/>
    <property type="project" value="InterPro"/>
</dbReference>
<dbReference type="GO" id="GO:0006412">
    <property type="term" value="P:translation"/>
    <property type="evidence" value="ECO:0007669"/>
    <property type="project" value="UniProtKB-UniRule"/>
</dbReference>
<dbReference type="CDD" id="cd00387">
    <property type="entry name" value="Ribosomal_L7_L12"/>
    <property type="match status" value="1"/>
</dbReference>
<dbReference type="FunFam" id="3.30.1390.10:FF:000001">
    <property type="entry name" value="50S ribosomal protein L7/L12"/>
    <property type="match status" value="1"/>
</dbReference>
<dbReference type="Gene3D" id="3.30.1390.10">
    <property type="match status" value="1"/>
</dbReference>
<dbReference type="Gene3D" id="1.20.5.710">
    <property type="entry name" value="Single helix bin"/>
    <property type="match status" value="1"/>
</dbReference>
<dbReference type="HAMAP" id="MF_00368">
    <property type="entry name" value="Ribosomal_bL12"/>
    <property type="match status" value="1"/>
</dbReference>
<dbReference type="InterPro" id="IPR000206">
    <property type="entry name" value="Ribosomal_bL12"/>
</dbReference>
<dbReference type="InterPro" id="IPR013823">
    <property type="entry name" value="Ribosomal_bL12_C"/>
</dbReference>
<dbReference type="InterPro" id="IPR014719">
    <property type="entry name" value="Ribosomal_bL12_C/ClpS-like"/>
</dbReference>
<dbReference type="InterPro" id="IPR008932">
    <property type="entry name" value="Ribosomal_bL12_oligo"/>
</dbReference>
<dbReference type="InterPro" id="IPR036235">
    <property type="entry name" value="Ribosomal_bL12_oligo_N_sf"/>
</dbReference>
<dbReference type="NCBIfam" id="TIGR00855">
    <property type="entry name" value="L12"/>
    <property type="match status" value="1"/>
</dbReference>
<dbReference type="PANTHER" id="PTHR45987">
    <property type="entry name" value="39S RIBOSOMAL PROTEIN L12"/>
    <property type="match status" value="1"/>
</dbReference>
<dbReference type="PANTHER" id="PTHR45987:SF4">
    <property type="entry name" value="LARGE RIBOSOMAL SUBUNIT PROTEIN BL12M"/>
    <property type="match status" value="1"/>
</dbReference>
<dbReference type="Pfam" id="PF00542">
    <property type="entry name" value="Ribosomal_L12"/>
    <property type="match status" value="1"/>
</dbReference>
<dbReference type="Pfam" id="PF16320">
    <property type="entry name" value="Ribosomal_L12_N"/>
    <property type="match status" value="1"/>
</dbReference>
<dbReference type="SUPFAM" id="SSF54736">
    <property type="entry name" value="ClpS-like"/>
    <property type="match status" value="1"/>
</dbReference>
<dbReference type="SUPFAM" id="SSF48300">
    <property type="entry name" value="Ribosomal protein L7/12, oligomerisation (N-terminal) domain"/>
    <property type="match status" value="1"/>
</dbReference>
<gene>
    <name evidence="1" type="primary">rplL</name>
    <name type="ordered locus">BQ07140</name>
</gene>
<feature type="chain" id="PRO_0000243389" description="Large ribosomal subunit protein bL12">
    <location>
        <begin position="1"/>
        <end position="123"/>
    </location>
</feature>
<protein>
    <recommendedName>
        <fullName evidence="1">Large ribosomal subunit protein bL12</fullName>
    </recommendedName>
    <alternativeName>
        <fullName evidence="2">50S ribosomal protein L7/L12</fullName>
    </alternativeName>
</protein>
<organism>
    <name type="scientific">Bartonella quintana (strain Toulouse)</name>
    <name type="common">Rochalimaea quintana</name>
    <dbReference type="NCBI Taxonomy" id="283165"/>
    <lineage>
        <taxon>Bacteria</taxon>
        <taxon>Pseudomonadati</taxon>
        <taxon>Pseudomonadota</taxon>
        <taxon>Alphaproteobacteria</taxon>
        <taxon>Hyphomicrobiales</taxon>
        <taxon>Bartonellaceae</taxon>
        <taxon>Bartonella</taxon>
    </lineage>
</organism>
<reference key="1">
    <citation type="journal article" date="2004" name="Proc. Natl. Acad. Sci. U.S.A.">
        <title>The louse-borne human pathogen Bartonella quintana is a genomic derivative of the zoonotic agent Bartonella henselae.</title>
        <authorList>
            <person name="Alsmark U.C.M."/>
            <person name="Frank A.C."/>
            <person name="Karlberg E.O."/>
            <person name="Legault B.-A."/>
            <person name="Ardell D.H."/>
            <person name="Canbaeck B."/>
            <person name="Eriksson A.-S."/>
            <person name="Naeslund A.K."/>
            <person name="Handley S.A."/>
            <person name="Huvet M."/>
            <person name="La Scola B."/>
            <person name="Holmberg M."/>
            <person name="Andersson S.G.E."/>
        </authorList>
    </citation>
    <scope>NUCLEOTIDE SEQUENCE [LARGE SCALE GENOMIC DNA]</scope>
    <source>
        <strain>Toulouse</strain>
    </source>
</reference>
<comment type="function">
    <text evidence="1">Forms part of the ribosomal stalk which helps the ribosome interact with GTP-bound translation factors. Is thus essential for accurate translation.</text>
</comment>
<comment type="subunit">
    <text evidence="1">Homodimer. Part of the ribosomal stalk of the 50S ribosomal subunit. Forms a multimeric L10(L12)X complex, where L10 forms an elongated spine to which 2 to 4 L12 dimers bind in a sequential fashion. Binds GTP-bound translation factors.</text>
</comment>
<comment type="similarity">
    <text evidence="1">Belongs to the bacterial ribosomal protein bL12 family.</text>
</comment>
<accession>Q6FZL8</accession>
<sequence>MADLAKIVEDLSNLTLLEAAELSKLLEEKWGVSAAAPVAVATVAGAAAPAAEEKTEFDVILVDCGAQKINVIKEVRALTGLGLKEAKDLVEGAPKPIKEGASKDEAEKIKSQLEAAGAKVEFK</sequence>
<evidence type="ECO:0000255" key="1">
    <source>
        <dbReference type="HAMAP-Rule" id="MF_00368"/>
    </source>
</evidence>
<evidence type="ECO:0000305" key="2"/>
<name>RL7_BARQU</name>
<proteinExistence type="inferred from homology"/>